<feature type="chain" id="PRO_0000321346" description="Adenine phosphoribosyltransferase">
    <location>
        <begin position="1"/>
        <end position="206"/>
    </location>
</feature>
<keyword id="KW-0963">Cytoplasm</keyword>
<keyword id="KW-0328">Glycosyltransferase</keyword>
<keyword id="KW-0660">Purine salvage</keyword>
<keyword id="KW-0808">Transferase</keyword>
<name>APT_BURMS</name>
<sequence>MSSDRRTARDCSAVFFGEFHDVHVGRAARSRRVHSQPHPHGAGLAAARRDVSRHHAALQSAKALRVLVDLFVERYVDAKLDYIAGLDARGFIIAPIVAYELSVGFVPIRKVGKLPYATQRESYALEYGTATVEIHEDACKPGDRVVIVDDLIATGGTMMAGKNLLERLGAVVVEGAAIVDLPDLGGSALLREAGLPLYTVTEFPGH</sequence>
<gene>
    <name evidence="1" type="primary">apt</name>
    <name type="ordered locus">BMASAVP1_A0069</name>
</gene>
<organism>
    <name type="scientific">Burkholderia mallei (strain SAVP1)</name>
    <dbReference type="NCBI Taxonomy" id="320388"/>
    <lineage>
        <taxon>Bacteria</taxon>
        <taxon>Pseudomonadati</taxon>
        <taxon>Pseudomonadota</taxon>
        <taxon>Betaproteobacteria</taxon>
        <taxon>Burkholderiales</taxon>
        <taxon>Burkholderiaceae</taxon>
        <taxon>Burkholderia</taxon>
        <taxon>pseudomallei group</taxon>
    </lineage>
</organism>
<proteinExistence type="inferred from homology"/>
<dbReference type="EC" id="2.4.2.7" evidence="1"/>
<dbReference type="EMBL" id="CP000526">
    <property type="protein sequence ID" value="ABM51593.1"/>
    <property type="molecule type" value="Genomic_DNA"/>
</dbReference>
<dbReference type="RefSeq" id="WP_004195202.1">
    <property type="nucleotide sequence ID" value="NC_008785.1"/>
</dbReference>
<dbReference type="SMR" id="A1UZL8"/>
<dbReference type="KEGG" id="bmv:BMASAVP1_A0069"/>
<dbReference type="HOGENOM" id="CLU_1329862_0_0_4"/>
<dbReference type="UniPathway" id="UPA00588">
    <property type="reaction ID" value="UER00646"/>
</dbReference>
<dbReference type="GO" id="GO:0005737">
    <property type="term" value="C:cytoplasm"/>
    <property type="evidence" value="ECO:0007669"/>
    <property type="project" value="UniProtKB-SubCell"/>
</dbReference>
<dbReference type="GO" id="GO:0003999">
    <property type="term" value="F:adenine phosphoribosyltransferase activity"/>
    <property type="evidence" value="ECO:0007669"/>
    <property type="project" value="UniProtKB-UniRule"/>
</dbReference>
<dbReference type="GO" id="GO:0006168">
    <property type="term" value="P:adenine salvage"/>
    <property type="evidence" value="ECO:0007669"/>
    <property type="project" value="InterPro"/>
</dbReference>
<dbReference type="GO" id="GO:0044209">
    <property type="term" value="P:AMP salvage"/>
    <property type="evidence" value="ECO:0007669"/>
    <property type="project" value="UniProtKB-UniRule"/>
</dbReference>
<dbReference type="GO" id="GO:0006166">
    <property type="term" value="P:purine ribonucleoside salvage"/>
    <property type="evidence" value="ECO:0007669"/>
    <property type="project" value="UniProtKB-KW"/>
</dbReference>
<dbReference type="CDD" id="cd06223">
    <property type="entry name" value="PRTases_typeI"/>
    <property type="match status" value="1"/>
</dbReference>
<dbReference type="FunFam" id="3.40.50.2020:FF:000004">
    <property type="entry name" value="Adenine phosphoribosyltransferase"/>
    <property type="match status" value="1"/>
</dbReference>
<dbReference type="Gene3D" id="3.40.50.2020">
    <property type="match status" value="1"/>
</dbReference>
<dbReference type="HAMAP" id="MF_00004">
    <property type="entry name" value="Aden_phosphoribosyltr"/>
    <property type="match status" value="1"/>
</dbReference>
<dbReference type="InterPro" id="IPR005764">
    <property type="entry name" value="Ade_phspho_trans"/>
</dbReference>
<dbReference type="InterPro" id="IPR050120">
    <property type="entry name" value="Adenine_PRTase"/>
</dbReference>
<dbReference type="InterPro" id="IPR000836">
    <property type="entry name" value="PRibTrfase_dom"/>
</dbReference>
<dbReference type="InterPro" id="IPR029057">
    <property type="entry name" value="PRTase-like"/>
</dbReference>
<dbReference type="NCBIfam" id="NF002634">
    <property type="entry name" value="PRK02304.1-3"/>
    <property type="match status" value="1"/>
</dbReference>
<dbReference type="NCBIfam" id="NF002636">
    <property type="entry name" value="PRK02304.1-5"/>
    <property type="match status" value="1"/>
</dbReference>
<dbReference type="PANTHER" id="PTHR11776">
    <property type="entry name" value="ADENINE PHOSPHORIBOSYLTRANSFERASE"/>
    <property type="match status" value="1"/>
</dbReference>
<dbReference type="PANTHER" id="PTHR11776:SF7">
    <property type="entry name" value="PHOSPHORIBOSYLTRANSFERASE DOMAIN-CONTAINING PROTEIN"/>
    <property type="match status" value="1"/>
</dbReference>
<dbReference type="Pfam" id="PF00156">
    <property type="entry name" value="Pribosyltran"/>
    <property type="match status" value="1"/>
</dbReference>
<dbReference type="SUPFAM" id="SSF53271">
    <property type="entry name" value="PRTase-like"/>
    <property type="match status" value="1"/>
</dbReference>
<dbReference type="PROSITE" id="PS00103">
    <property type="entry name" value="PUR_PYR_PR_TRANSFER"/>
    <property type="match status" value="1"/>
</dbReference>
<evidence type="ECO:0000255" key="1">
    <source>
        <dbReference type="HAMAP-Rule" id="MF_00004"/>
    </source>
</evidence>
<reference key="1">
    <citation type="journal article" date="2010" name="Genome Biol. Evol.">
        <title>Continuing evolution of Burkholderia mallei through genome reduction and large-scale rearrangements.</title>
        <authorList>
            <person name="Losada L."/>
            <person name="Ronning C.M."/>
            <person name="DeShazer D."/>
            <person name="Woods D."/>
            <person name="Fedorova N."/>
            <person name="Kim H.S."/>
            <person name="Shabalina S.A."/>
            <person name="Pearson T.R."/>
            <person name="Brinkac L."/>
            <person name="Tan P."/>
            <person name="Nandi T."/>
            <person name="Crabtree J."/>
            <person name="Badger J."/>
            <person name="Beckstrom-Sternberg S."/>
            <person name="Saqib M."/>
            <person name="Schutzer S.E."/>
            <person name="Keim P."/>
            <person name="Nierman W.C."/>
        </authorList>
    </citation>
    <scope>NUCLEOTIDE SEQUENCE [LARGE SCALE GENOMIC DNA]</scope>
    <source>
        <strain>SAVP1</strain>
    </source>
</reference>
<accession>A1UZL8</accession>
<protein>
    <recommendedName>
        <fullName evidence="1">Adenine phosphoribosyltransferase</fullName>
        <shortName evidence="1">APRT</shortName>
        <ecNumber evidence="1">2.4.2.7</ecNumber>
    </recommendedName>
</protein>
<comment type="function">
    <text evidence="1">Catalyzes a salvage reaction resulting in the formation of AMP, that is energically less costly than de novo synthesis.</text>
</comment>
<comment type="catalytic activity">
    <reaction evidence="1">
        <text>AMP + diphosphate = 5-phospho-alpha-D-ribose 1-diphosphate + adenine</text>
        <dbReference type="Rhea" id="RHEA:16609"/>
        <dbReference type="ChEBI" id="CHEBI:16708"/>
        <dbReference type="ChEBI" id="CHEBI:33019"/>
        <dbReference type="ChEBI" id="CHEBI:58017"/>
        <dbReference type="ChEBI" id="CHEBI:456215"/>
        <dbReference type="EC" id="2.4.2.7"/>
    </reaction>
</comment>
<comment type="pathway">
    <text evidence="1">Purine metabolism; AMP biosynthesis via salvage pathway; AMP from adenine: step 1/1.</text>
</comment>
<comment type="subunit">
    <text evidence="1">Homodimer.</text>
</comment>
<comment type="subcellular location">
    <subcellularLocation>
        <location evidence="1">Cytoplasm</location>
    </subcellularLocation>
</comment>
<comment type="similarity">
    <text evidence="1">Belongs to the purine/pyrimidine phosphoribosyltransferase family.</text>
</comment>